<sequence>MKTPIELKILDSRIGSEFPLPAYATLGSAGMDLRAMIDTTMTIAPGETQLIPTGIAIHVADPGLAAVILPRSGLGHKHGIVLGNLVGLIDSDYQGPLMVSCWNRSNSPFTLDIGDRLAQLVFVPVVQAQFKLVDEFDSSDRGEGGFGHSGTK</sequence>
<name>DUT_SHESW</name>
<protein>
    <recommendedName>
        <fullName evidence="1">Deoxyuridine 5'-triphosphate nucleotidohydrolase</fullName>
        <shortName evidence="1">dUTPase</shortName>
        <ecNumber evidence="1">3.6.1.23</ecNumber>
    </recommendedName>
    <alternativeName>
        <fullName evidence="1">dUTP pyrophosphatase</fullName>
    </alternativeName>
</protein>
<keyword id="KW-0378">Hydrolase</keyword>
<keyword id="KW-0460">Magnesium</keyword>
<keyword id="KW-0479">Metal-binding</keyword>
<keyword id="KW-0546">Nucleotide metabolism</keyword>
<comment type="function">
    <text evidence="1">This enzyme is involved in nucleotide metabolism: it produces dUMP, the immediate precursor of thymidine nucleotides and it decreases the intracellular concentration of dUTP so that uracil cannot be incorporated into DNA.</text>
</comment>
<comment type="catalytic activity">
    <reaction evidence="1">
        <text>dUTP + H2O = dUMP + diphosphate + H(+)</text>
        <dbReference type="Rhea" id="RHEA:10248"/>
        <dbReference type="ChEBI" id="CHEBI:15377"/>
        <dbReference type="ChEBI" id="CHEBI:15378"/>
        <dbReference type="ChEBI" id="CHEBI:33019"/>
        <dbReference type="ChEBI" id="CHEBI:61555"/>
        <dbReference type="ChEBI" id="CHEBI:246422"/>
        <dbReference type="EC" id="3.6.1.23"/>
    </reaction>
</comment>
<comment type="cofactor">
    <cofactor evidence="1">
        <name>Mg(2+)</name>
        <dbReference type="ChEBI" id="CHEBI:18420"/>
    </cofactor>
</comment>
<comment type="pathway">
    <text evidence="1">Pyrimidine metabolism; dUMP biosynthesis; dUMP from dCTP (dUTP route): step 2/2.</text>
</comment>
<comment type="similarity">
    <text evidence="1">Belongs to the dUTPase family.</text>
</comment>
<gene>
    <name evidence="1" type="primary">dut</name>
    <name type="ordered locus">Sputw3181_0336</name>
</gene>
<proteinExistence type="inferred from homology"/>
<reference key="1">
    <citation type="submission" date="2006-12" db="EMBL/GenBank/DDBJ databases">
        <title>Complete sequence of Shewanella sp. W3-18-1.</title>
        <authorList>
            <consortium name="US DOE Joint Genome Institute"/>
            <person name="Copeland A."/>
            <person name="Lucas S."/>
            <person name="Lapidus A."/>
            <person name="Barry K."/>
            <person name="Detter J.C."/>
            <person name="Glavina del Rio T."/>
            <person name="Hammon N."/>
            <person name="Israni S."/>
            <person name="Dalin E."/>
            <person name="Tice H."/>
            <person name="Pitluck S."/>
            <person name="Chain P."/>
            <person name="Malfatti S."/>
            <person name="Shin M."/>
            <person name="Vergez L."/>
            <person name="Schmutz J."/>
            <person name="Larimer F."/>
            <person name="Land M."/>
            <person name="Hauser L."/>
            <person name="Kyrpides N."/>
            <person name="Lykidis A."/>
            <person name="Tiedje J."/>
            <person name="Richardson P."/>
        </authorList>
    </citation>
    <scope>NUCLEOTIDE SEQUENCE [LARGE SCALE GENOMIC DNA]</scope>
    <source>
        <strain>W3-18-1</strain>
    </source>
</reference>
<feature type="chain" id="PRO_1000015521" description="Deoxyuridine 5'-triphosphate nucleotidohydrolase">
    <location>
        <begin position="1"/>
        <end position="152"/>
    </location>
</feature>
<feature type="binding site" evidence="1">
    <location>
        <begin position="71"/>
        <end position="73"/>
    </location>
    <ligand>
        <name>substrate</name>
    </ligand>
</feature>
<feature type="binding site" evidence="1">
    <location>
        <position position="84"/>
    </location>
    <ligand>
        <name>substrate</name>
    </ligand>
</feature>
<feature type="binding site" evidence="1">
    <location>
        <begin position="88"/>
        <end position="90"/>
    </location>
    <ligand>
        <name>substrate</name>
    </ligand>
</feature>
<feature type="binding site" evidence="1">
    <location>
        <position position="98"/>
    </location>
    <ligand>
        <name>substrate</name>
    </ligand>
</feature>
<dbReference type="EC" id="3.6.1.23" evidence="1"/>
<dbReference type="EMBL" id="CP000503">
    <property type="protein sequence ID" value="ABM23187.1"/>
    <property type="molecule type" value="Genomic_DNA"/>
</dbReference>
<dbReference type="RefSeq" id="WP_011787732.1">
    <property type="nucleotide sequence ID" value="NC_008750.1"/>
</dbReference>
<dbReference type="SMR" id="A1REU2"/>
<dbReference type="GeneID" id="67441919"/>
<dbReference type="KEGG" id="shw:Sputw3181_0336"/>
<dbReference type="HOGENOM" id="CLU_068508_1_1_6"/>
<dbReference type="UniPathway" id="UPA00610">
    <property type="reaction ID" value="UER00666"/>
</dbReference>
<dbReference type="Proteomes" id="UP000002597">
    <property type="component" value="Chromosome"/>
</dbReference>
<dbReference type="GO" id="GO:0004170">
    <property type="term" value="F:dUTP diphosphatase activity"/>
    <property type="evidence" value="ECO:0007669"/>
    <property type="project" value="UniProtKB-UniRule"/>
</dbReference>
<dbReference type="GO" id="GO:0000287">
    <property type="term" value="F:magnesium ion binding"/>
    <property type="evidence" value="ECO:0007669"/>
    <property type="project" value="UniProtKB-UniRule"/>
</dbReference>
<dbReference type="GO" id="GO:0006226">
    <property type="term" value="P:dUMP biosynthetic process"/>
    <property type="evidence" value="ECO:0007669"/>
    <property type="project" value="UniProtKB-UniRule"/>
</dbReference>
<dbReference type="GO" id="GO:0046081">
    <property type="term" value="P:dUTP catabolic process"/>
    <property type="evidence" value="ECO:0007669"/>
    <property type="project" value="InterPro"/>
</dbReference>
<dbReference type="CDD" id="cd07557">
    <property type="entry name" value="trimeric_dUTPase"/>
    <property type="match status" value="1"/>
</dbReference>
<dbReference type="FunFam" id="2.70.40.10:FF:000002">
    <property type="entry name" value="dUTP diphosphatase"/>
    <property type="match status" value="1"/>
</dbReference>
<dbReference type="Gene3D" id="2.70.40.10">
    <property type="match status" value="1"/>
</dbReference>
<dbReference type="HAMAP" id="MF_00116">
    <property type="entry name" value="dUTPase_bact"/>
    <property type="match status" value="1"/>
</dbReference>
<dbReference type="InterPro" id="IPR008181">
    <property type="entry name" value="dUTPase"/>
</dbReference>
<dbReference type="InterPro" id="IPR029054">
    <property type="entry name" value="dUTPase-like"/>
</dbReference>
<dbReference type="InterPro" id="IPR036157">
    <property type="entry name" value="dUTPase-like_sf"/>
</dbReference>
<dbReference type="InterPro" id="IPR033704">
    <property type="entry name" value="dUTPase_trimeric"/>
</dbReference>
<dbReference type="NCBIfam" id="TIGR00576">
    <property type="entry name" value="dut"/>
    <property type="match status" value="1"/>
</dbReference>
<dbReference type="NCBIfam" id="NF001862">
    <property type="entry name" value="PRK00601.1"/>
    <property type="match status" value="1"/>
</dbReference>
<dbReference type="PANTHER" id="PTHR11241">
    <property type="entry name" value="DEOXYURIDINE 5'-TRIPHOSPHATE NUCLEOTIDOHYDROLASE"/>
    <property type="match status" value="1"/>
</dbReference>
<dbReference type="PANTHER" id="PTHR11241:SF0">
    <property type="entry name" value="DEOXYURIDINE 5'-TRIPHOSPHATE NUCLEOTIDOHYDROLASE"/>
    <property type="match status" value="1"/>
</dbReference>
<dbReference type="Pfam" id="PF00692">
    <property type="entry name" value="dUTPase"/>
    <property type="match status" value="1"/>
</dbReference>
<dbReference type="SUPFAM" id="SSF51283">
    <property type="entry name" value="dUTPase-like"/>
    <property type="match status" value="1"/>
</dbReference>
<accession>A1REU2</accession>
<organism>
    <name type="scientific">Shewanella sp. (strain W3-18-1)</name>
    <dbReference type="NCBI Taxonomy" id="351745"/>
    <lineage>
        <taxon>Bacteria</taxon>
        <taxon>Pseudomonadati</taxon>
        <taxon>Pseudomonadota</taxon>
        <taxon>Gammaproteobacteria</taxon>
        <taxon>Alteromonadales</taxon>
        <taxon>Shewanellaceae</taxon>
        <taxon>Shewanella</taxon>
    </lineage>
</organism>
<evidence type="ECO:0000255" key="1">
    <source>
        <dbReference type="HAMAP-Rule" id="MF_00116"/>
    </source>
</evidence>